<feature type="chain" id="PRO_0000095251" description="Adenylosuccinate synthetase">
    <location>
        <begin position="1"/>
        <end position="429"/>
    </location>
</feature>
<feature type="active site" description="Proton acceptor" evidence="1">
    <location>
        <position position="13"/>
    </location>
</feature>
<feature type="active site" description="Proton donor" evidence="1">
    <location>
        <position position="41"/>
    </location>
</feature>
<feature type="binding site" evidence="1">
    <location>
        <begin position="12"/>
        <end position="18"/>
    </location>
    <ligand>
        <name>GTP</name>
        <dbReference type="ChEBI" id="CHEBI:37565"/>
    </ligand>
</feature>
<feature type="binding site" description="in other chain" evidence="1">
    <location>
        <begin position="13"/>
        <end position="16"/>
    </location>
    <ligand>
        <name>IMP</name>
        <dbReference type="ChEBI" id="CHEBI:58053"/>
        <note>ligand shared between dimeric partners</note>
    </ligand>
</feature>
<feature type="binding site" evidence="1">
    <location>
        <position position="13"/>
    </location>
    <ligand>
        <name>Mg(2+)</name>
        <dbReference type="ChEBI" id="CHEBI:18420"/>
    </ligand>
</feature>
<feature type="binding site" description="in other chain" evidence="1">
    <location>
        <begin position="38"/>
        <end position="41"/>
    </location>
    <ligand>
        <name>IMP</name>
        <dbReference type="ChEBI" id="CHEBI:58053"/>
        <note>ligand shared between dimeric partners</note>
    </ligand>
</feature>
<feature type="binding site" evidence="1">
    <location>
        <begin position="40"/>
        <end position="42"/>
    </location>
    <ligand>
        <name>GTP</name>
        <dbReference type="ChEBI" id="CHEBI:37565"/>
    </ligand>
</feature>
<feature type="binding site" evidence="1">
    <location>
        <position position="40"/>
    </location>
    <ligand>
        <name>Mg(2+)</name>
        <dbReference type="ChEBI" id="CHEBI:18420"/>
    </ligand>
</feature>
<feature type="binding site" description="in other chain" evidence="1">
    <location>
        <position position="128"/>
    </location>
    <ligand>
        <name>IMP</name>
        <dbReference type="ChEBI" id="CHEBI:58053"/>
        <note>ligand shared between dimeric partners</note>
    </ligand>
</feature>
<feature type="binding site" evidence="1">
    <location>
        <position position="142"/>
    </location>
    <ligand>
        <name>IMP</name>
        <dbReference type="ChEBI" id="CHEBI:58053"/>
        <note>ligand shared between dimeric partners</note>
    </ligand>
</feature>
<feature type="binding site" description="in other chain" evidence="1">
    <location>
        <position position="223"/>
    </location>
    <ligand>
        <name>IMP</name>
        <dbReference type="ChEBI" id="CHEBI:58053"/>
        <note>ligand shared between dimeric partners</note>
    </ligand>
</feature>
<feature type="binding site" description="in other chain" evidence="1">
    <location>
        <position position="238"/>
    </location>
    <ligand>
        <name>IMP</name>
        <dbReference type="ChEBI" id="CHEBI:58053"/>
        <note>ligand shared between dimeric partners</note>
    </ligand>
</feature>
<feature type="binding site" evidence="1">
    <location>
        <begin position="298"/>
        <end position="304"/>
    </location>
    <ligand>
        <name>substrate</name>
    </ligand>
</feature>
<feature type="binding site" description="in other chain" evidence="1">
    <location>
        <position position="302"/>
    </location>
    <ligand>
        <name>IMP</name>
        <dbReference type="ChEBI" id="CHEBI:58053"/>
        <note>ligand shared between dimeric partners</note>
    </ligand>
</feature>
<feature type="binding site" evidence="1">
    <location>
        <position position="304"/>
    </location>
    <ligand>
        <name>GTP</name>
        <dbReference type="ChEBI" id="CHEBI:37565"/>
    </ligand>
</feature>
<feature type="binding site" evidence="1">
    <location>
        <begin position="330"/>
        <end position="332"/>
    </location>
    <ligand>
        <name>GTP</name>
        <dbReference type="ChEBI" id="CHEBI:37565"/>
    </ligand>
</feature>
<feature type="binding site" evidence="1">
    <location>
        <begin position="412"/>
        <end position="414"/>
    </location>
    <ligand>
        <name>GTP</name>
        <dbReference type="ChEBI" id="CHEBI:37565"/>
    </ligand>
</feature>
<reference key="1">
    <citation type="journal article" date="2003" name="Lancet">
        <title>Sequencing and analysis of the genome of the Whipple's disease bacterium Tropheryma whipplei.</title>
        <authorList>
            <person name="Bentley S.D."/>
            <person name="Maiwald M."/>
            <person name="Murphy L.D."/>
            <person name="Pallen M.J."/>
            <person name="Yeats C.A."/>
            <person name="Dover L.G."/>
            <person name="Norbertczak H.T."/>
            <person name="Besra G.S."/>
            <person name="Quail M.A."/>
            <person name="Harris D.E."/>
            <person name="von Herbay A."/>
            <person name="Goble A."/>
            <person name="Rutter S."/>
            <person name="Squares R."/>
            <person name="Squares S."/>
            <person name="Barrell B.G."/>
            <person name="Parkhill J."/>
            <person name="Relman D.A."/>
        </authorList>
    </citation>
    <scope>NUCLEOTIDE SEQUENCE [LARGE SCALE GENOMIC DNA]</scope>
    <source>
        <strain>TW08/27</strain>
    </source>
</reference>
<gene>
    <name evidence="1" type="primary">purA</name>
    <name type="ordered locus">TW801</name>
</gene>
<keyword id="KW-0963">Cytoplasm</keyword>
<keyword id="KW-0342">GTP-binding</keyword>
<keyword id="KW-0436">Ligase</keyword>
<keyword id="KW-0460">Magnesium</keyword>
<keyword id="KW-0479">Metal-binding</keyword>
<keyword id="KW-0547">Nucleotide-binding</keyword>
<keyword id="KW-0658">Purine biosynthesis</keyword>
<protein>
    <recommendedName>
        <fullName evidence="1">Adenylosuccinate synthetase</fullName>
        <shortName evidence="1">AMPSase</shortName>
        <shortName evidence="1">AdSS</shortName>
        <ecNumber evidence="1">6.3.4.4</ecNumber>
    </recommendedName>
    <alternativeName>
        <fullName evidence="1">IMP--aspartate ligase</fullName>
    </alternativeName>
</protein>
<sequence length="429" mass="46844">MPATILIGAQWGDEGKGKATDLLAKDIDYVVKFNGGNNAGHTVVIGGDKYVLHLLPSGILNENVVPVIANGVVINPEVLFDEIATLNSRGVNTDKLVISANAHIIAPFHRTIDLVTERFLGKRQLGTTGRGIGPTYADKINRIGIRVQDLFDKSVLRQKIEGSLSNKNHMLVKVFNRRSVSVTEMLDYLLSFAERMRPMIADTSLLLNNALDCGKHVLFEGGQATMLDVDHGSYPFVTSSNATVGGAITGAGIGPTRVNKVIGVAKSYTTRVGAGPFPTELHDEYGEWLQKRGYEVGATTGRKRRCGWFDGVVARYATRINGITDYVLTKLDVLTGLDRIPICVGYKVGDSVFREMPVSQSDFHHAVPIYEDLPGWQCNISECESFDSLPPEARGYVLALEDLIKARISVIGTGPERENIIIRHPLGIF</sequence>
<organism>
    <name type="scientific">Tropheryma whipplei (strain TW08/27)</name>
    <name type="common">Whipple's bacillus</name>
    <dbReference type="NCBI Taxonomy" id="218496"/>
    <lineage>
        <taxon>Bacteria</taxon>
        <taxon>Bacillati</taxon>
        <taxon>Actinomycetota</taxon>
        <taxon>Actinomycetes</taxon>
        <taxon>Micrococcales</taxon>
        <taxon>Tropherymataceae</taxon>
        <taxon>Tropheryma</taxon>
    </lineage>
</organism>
<proteinExistence type="inferred from homology"/>
<dbReference type="EC" id="6.3.4.4" evidence="1"/>
<dbReference type="EMBL" id="BX251412">
    <property type="protein sequence ID" value="CAD67460.1"/>
    <property type="molecule type" value="Genomic_DNA"/>
</dbReference>
<dbReference type="RefSeq" id="WP_011096738.1">
    <property type="nucleotide sequence ID" value="NC_004551.1"/>
</dbReference>
<dbReference type="SMR" id="Q83H67"/>
<dbReference type="GeneID" id="67388583"/>
<dbReference type="KEGG" id="tws:TW801"/>
<dbReference type="HOGENOM" id="CLU_029848_0_0_11"/>
<dbReference type="UniPathway" id="UPA00075">
    <property type="reaction ID" value="UER00335"/>
</dbReference>
<dbReference type="GO" id="GO:0005737">
    <property type="term" value="C:cytoplasm"/>
    <property type="evidence" value="ECO:0007669"/>
    <property type="project" value="UniProtKB-SubCell"/>
</dbReference>
<dbReference type="GO" id="GO:0004019">
    <property type="term" value="F:adenylosuccinate synthase activity"/>
    <property type="evidence" value="ECO:0007669"/>
    <property type="project" value="UniProtKB-UniRule"/>
</dbReference>
<dbReference type="GO" id="GO:0005525">
    <property type="term" value="F:GTP binding"/>
    <property type="evidence" value="ECO:0007669"/>
    <property type="project" value="UniProtKB-UniRule"/>
</dbReference>
<dbReference type="GO" id="GO:0000287">
    <property type="term" value="F:magnesium ion binding"/>
    <property type="evidence" value="ECO:0007669"/>
    <property type="project" value="UniProtKB-UniRule"/>
</dbReference>
<dbReference type="GO" id="GO:0044208">
    <property type="term" value="P:'de novo' AMP biosynthetic process"/>
    <property type="evidence" value="ECO:0007669"/>
    <property type="project" value="UniProtKB-UniRule"/>
</dbReference>
<dbReference type="GO" id="GO:0046040">
    <property type="term" value="P:IMP metabolic process"/>
    <property type="evidence" value="ECO:0007669"/>
    <property type="project" value="TreeGrafter"/>
</dbReference>
<dbReference type="CDD" id="cd03108">
    <property type="entry name" value="AdSS"/>
    <property type="match status" value="1"/>
</dbReference>
<dbReference type="FunFam" id="1.10.300.10:FF:000001">
    <property type="entry name" value="Adenylosuccinate synthetase"/>
    <property type="match status" value="1"/>
</dbReference>
<dbReference type="FunFam" id="3.90.170.10:FF:000001">
    <property type="entry name" value="Adenylosuccinate synthetase"/>
    <property type="match status" value="1"/>
</dbReference>
<dbReference type="Gene3D" id="3.40.440.10">
    <property type="entry name" value="Adenylosuccinate Synthetase, subunit A, domain 1"/>
    <property type="match status" value="1"/>
</dbReference>
<dbReference type="Gene3D" id="1.10.300.10">
    <property type="entry name" value="Adenylosuccinate Synthetase, subunit A, domain 2"/>
    <property type="match status" value="1"/>
</dbReference>
<dbReference type="Gene3D" id="3.90.170.10">
    <property type="entry name" value="Adenylosuccinate Synthetase, subunit A, domain 3"/>
    <property type="match status" value="1"/>
</dbReference>
<dbReference type="HAMAP" id="MF_00011">
    <property type="entry name" value="Adenylosucc_synth"/>
    <property type="match status" value="1"/>
</dbReference>
<dbReference type="InterPro" id="IPR018220">
    <property type="entry name" value="Adenylosuccin_syn_GTP-bd"/>
</dbReference>
<dbReference type="InterPro" id="IPR033128">
    <property type="entry name" value="Adenylosuccin_syn_Lys_AS"/>
</dbReference>
<dbReference type="InterPro" id="IPR042109">
    <property type="entry name" value="Adenylosuccinate_synth_dom1"/>
</dbReference>
<dbReference type="InterPro" id="IPR042110">
    <property type="entry name" value="Adenylosuccinate_synth_dom2"/>
</dbReference>
<dbReference type="InterPro" id="IPR042111">
    <property type="entry name" value="Adenylosuccinate_synth_dom3"/>
</dbReference>
<dbReference type="InterPro" id="IPR001114">
    <property type="entry name" value="Adenylosuccinate_synthetase"/>
</dbReference>
<dbReference type="InterPro" id="IPR027417">
    <property type="entry name" value="P-loop_NTPase"/>
</dbReference>
<dbReference type="NCBIfam" id="NF002223">
    <property type="entry name" value="PRK01117.1"/>
    <property type="match status" value="1"/>
</dbReference>
<dbReference type="NCBIfam" id="TIGR00184">
    <property type="entry name" value="purA"/>
    <property type="match status" value="1"/>
</dbReference>
<dbReference type="PANTHER" id="PTHR11846">
    <property type="entry name" value="ADENYLOSUCCINATE SYNTHETASE"/>
    <property type="match status" value="1"/>
</dbReference>
<dbReference type="PANTHER" id="PTHR11846:SF0">
    <property type="entry name" value="ADENYLOSUCCINATE SYNTHETASE"/>
    <property type="match status" value="1"/>
</dbReference>
<dbReference type="Pfam" id="PF00709">
    <property type="entry name" value="Adenylsucc_synt"/>
    <property type="match status" value="1"/>
</dbReference>
<dbReference type="SMART" id="SM00788">
    <property type="entry name" value="Adenylsucc_synt"/>
    <property type="match status" value="1"/>
</dbReference>
<dbReference type="SUPFAM" id="SSF52540">
    <property type="entry name" value="P-loop containing nucleoside triphosphate hydrolases"/>
    <property type="match status" value="1"/>
</dbReference>
<dbReference type="PROSITE" id="PS01266">
    <property type="entry name" value="ADENYLOSUCCIN_SYN_1"/>
    <property type="match status" value="1"/>
</dbReference>
<dbReference type="PROSITE" id="PS00513">
    <property type="entry name" value="ADENYLOSUCCIN_SYN_2"/>
    <property type="match status" value="1"/>
</dbReference>
<name>PURA_TROW8</name>
<evidence type="ECO:0000255" key="1">
    <source>
        <dbReference type="HAMAP-Rule" id="MF_00011"/>
    </source>
</evidence>
<comment type="function">
    <text evidence="1">Plays an important role in the de novo pathway of purine nucleotide biosynthesis. Catalyzes the first committed step in the biosynthesis of AMP from IMP.</text>
</comment>
<comment type="catalytic activity">
    <reaction evidence="1">
        <text>IMP + L-aspartate + GTP = N(6)-(1,2-dicarboxyethyl)-AMP + GDP + phosphate + 2 H(+)</text>
        <dbReference type="Rhea" id="RHEA:15753"/>
        <dbReference type="ChEBI" id="CHEBI:15378"/>
        <dbReference type="ChEBI" id="CHEBI:29991"/>
        <dbReference type="ChEBI" id="CHEBI:37565"/>
        <dbReference type="ChEBI" id="CHEBI:43474"/>
        <dbReference type="ChEBI" id="CHEBI:57567"/>
        <dbReference type="ChEBI" id="CHEBI:58053"/>
        <dbReference type="ChEBI" id="CHEBI:58189"/>
        <dbReference type="EC" id="6.3.4.4"/>
    </reaction>
</comment>
<comment type="cofactor">
    <cofactor evidence="1">
        <name>Mg(2+)</name>
        <dbReference type="ChEBI" id="CHEBI:18420"/>
    </cofactor>
    <text evidence="1">Binds 1 Mg(2+) ion per subunit.</text>
</comment>
<comment type="pathway">
    <text evidence="1">Purine metabolism; AMP biosynthesis via de novo pathway; AMP from IMP: step 1/2.</text>
</comment>
<comment type="subunit">
    <text evidence="1">Homodimer.</text>
</comment>
<comment type="subcellular location">
    <subcellularLocation>
        <location evidence="1">Cytoplasm</location>
    </subcellularLocation>
</comment>
<comment type="similarity">
    <text evidence="1">Belongs to the adenylosuccinate synthetase family.</text>
</comment>
<accession>Q83H67</accession>